<reference key="1">
    <citation type="journal article" date="2005" name="Science">
        <title>The transcriptional landscape of the mammalian genome.</title>
        <authorList>
            <person name="Carninci P."/>
            <person name="Kasukawa T."/>
            <person name="Katayama S."/>
            <person name="Gough J."/>
            <person name="Frith M.C."/>
            <person name="Maeda N."/>
            <person name="Oyama R."/>
            <person name="Ravasi T."/>
            <person name="Lenhard B."/>
            <person name="Wells C."/>
            <person name="Kodzius R."/>
            <person name="Shimokawa K."/>
            <person name="Bajic V.B."/>
            <person name="Brenner S.E."/>
            <person name="Batalov S."/>
            <person name="Forrest A.R."/>
            <person name="Zavolan M."/>
            <person name="Davis M.J."/>
            <person name="Wilming L.G."/>
            <person name="Aidinis V."/>
            <person name="Allen J.E."/>
            <person name="Ambesi-Impiombato A."/>
            <person name="Apweiler R."/>
            <person name="Aturaliya R.N."/>
            <person name="Bailey T.L."/>
            <person name="Bansal M."/>
            <person name="Baxter L."/>
            <person name="Beisel K.W."/>
            <person name="Bersano T."/>
            <person name="Bono H."/>
            <person name="Chalk A.M."/>
            <person name="Chiu K.P."/>
            <person name="Choudhary V."/>
            <person name="Christoffels A."/>
            <person name="Clutterbuck D.R."/>
            <person name="Crowe M.L."/>
            <person name="Dalla E."/>
            <person name="Dalrymple B.P."/>
            <person name="de Bono B."/>
            <person name="Della Gatta G."/>
            <person name="di Bernardo D."/>
            <person name="Down T."/>
            <person name="Engstrom P."/>
            <person name="Fagiolini M."/>
            <person name="Faulkner G."/>
            <person name="Fletcher C.F."/>
            <person name="Fukushima T."/>
            <person name="Furuno M."/>
            <person name="Futaki S."/>
            <person name="Gariboldi M."/>
            <person name="Georgii-Hemming P."/>
            <person name="Gingeras T.R."/>
            <person name="Gojobori T."/>
            <person name="Green R.E."/>
            <person name="Gustincich S."/>
            <person name="Harbers M."/>
            <person name="Hayashi Y."/>
            <person name="Hensch T.K."/>
            <person name="Hirokawa N."/>
            <person name="Hill D."/>
            <person name="Huminiecki L."/>
            <person name="Iacono M."/>
            <person name="Ikeo K."/>
            <person name="Iwama A."/>
            <person name="Ishikawa T."/>
            <person name="Jakt M."/>
            <person name="Kanapin A."/>
            <person name="Katoh M."/>
            <person name="Kawasawa Y."/>
            <person name="Kelso J."/>
            <person name="Kitamura H."/>
            <person name="Kitano H."/>
            <person name="Kollias G."/>
            <person name="Krishnan S.P."/>
            <person name="Kruger A."/>
            <person name="Kummerfeld S.K."/>
            <person name="Kurochkin I.V."/>
            <person name="Lareau L.F."/>
            <person name="Lazarevic D."/>
            <person name="Lipovich L."/>
            <person name="Liu J."/>
            <person name="Liuni S."/>
            <person name="McWilliam S."/>
            <person name="Madan Babu M."/>
            <person name="Madera M."/>
            <person name="Marchionni L."/>
            <person name="Matsuda H."/>
            <person name="Matsuzawa S."/>
            <person name="Miki H."/>
            <person name="Mignone F."/>
            <person name="Miyake S."/>
            <person name="Morris K."/>
            <person name="Mottagui-Tabar S."/>
            <person name="Mulder N."/>
            <person name="Nakano N."/>
            <person name="Nakauchi H."/>
            <person name="Ng P."/>
            <person name="Nilsson R."/>
            <person name="Nishiguchi S."/>
            <person name="Nishikawa S."/>
            <person name="Nori F."/>
            <person name="Ohara O."/>
            <person name="Okazaki Y."/>
            <person name="Orlando V."/>
            <person name="Pang K.C."/>
            <person name="Pavan W.J."/>
            <person name="Pavesi G."/>
            <person name="Pesole G."/>
            <person name="Petrovsky N."/>
            <person name="Piazza S."/>
            <person name="Reed J."/>
            <person name="Reid J.F."/>
            <person name="Ring B.Z."/>
            <person name="Ringwald M."/>
            <person name="Rost B."/>
            <person name="Ruan Y."/>
            <person name="Salzberg S.L."/>
            <person name="Sandelin A."/>
            <person name="Schneider C."/>
            <person name="Schoenbach C."/>
            <person name="Sekiguchi K."/>
            <person name="Semple C.A."/>
            <person name="Seno S."/>
            <person name="Sessa L."/>
            <person name="Sheng Y."/>
            <person name="Shibata Y."/>
            <person name="Shimada H."/>
            <person name="Shimada K."/>
            <person name="Silva D."/>
            <person name="Sinclair B."/>
            <person name="Sperling S."/>
            <person name="Stupka E."/>
            <person name="Sugiura K."/>
            <person name="Sultana R."/>
            <person name="Takenaka Y."/>
            <person name="Taki K."/>
            <person name="Tammoja K."/>
            <person name="Tan S.L."/>
            <person name="Tang S."/>
            <person name="Taylor M.S."/>
            <person name="Tegner J."/>
            <person name="Teichmann S.A."/>
            <person name="Ueda H.R."/>
            <person name="van Nimwegen E."/>
            <person name="Verardo R."/>
            <person name="Wei C.L."/>
            <person name="Yagi K."/>
            <person name="Yamanishi H."/>
            <person name="Zabarovsky E."/>
            <person name="Zhu S."/>
            <person name="Zimmer A."/>
            <person name="Hide W."/>
            <person name="Bult C."/>
            <person name="Grimmond S.M."/>
            <person name="Teasdale R.D."/>
            <person name="Liu E.T."/>
            <person name="Brusic V."/>
            <person name="Quackenbush J."/>
            <person name="Wahlestedt C."/>
            <person name="Mattick J.S."/>
            <person name="Hume D.A."/>
            <person name="Kai C."/>
            <person name="Sasaki D."/>
            <person name="Tomaru Y."/>
            <person name="Fukuda S."/>
            <person name="Kanamori-Katayama M."/>
            <person name="Suzuki M."/>
            <person name="Aoki J."/>
            <person name="Arakawa T."/>
            <person name="Iida J."/>
            <person name="Imamura K."/>
            <person name="Itoh M."/>
            <person name="Kato T."/>
            <person name="Kawaji H."/>
            <person name="Kawagashira N."/>
            <person name="Kawashima T."/>
            <person name="Kojima M."/>
            <person name="Kondo S."/>
            <person name="Konno H."/>
            <person name="Nakano K."/>
            <person name="Ninomiya N."/>
            <person name="Nishio T."/>
            <person name="Okada M."/>
            <person name="Plessy C."/>
            <person name="Shibata K."/>
            <person name="Shiraki T."/>
            <person name="Suzuki S."/>
            <person name="Tagami M."/>
            <person name="Waki K."/>
            <person name="Watahiki A."/>
            <person name="Okamura-Oho Y."/>
            <person name="Suzuki H."/>
            <person name="Kawai J."/>
            <person name="Hayashizaki Y."/>
        </authorList>
    </citation>
    <scope>NUCLEOTIDE SEQUENCE [LARGE SCALE MRNA]</scope>
    <source>
        <strain>C57BL/6J</strain>
        <tissue>Placenta</tissue>
    </source>
</reference>
<reference key="2">
    <citation type="journal article" date="2003" name="Genome Res.">
        <title>Analysis of the gene-dense major histocompatibility complex class III region and its comparison to mouse.</title>
        <authorList>
            <person name="Xie T."/>
            <person name="Rowen L."/>
            <person name="Aguado B."/>
            <person name="Ahearn M.E."/>
            <person name="Madan A."/>
            <person name="Qin S."/>
            <person name="Campbell R.D."/>
            <person name="Hood L."/>
        </authorList>
    </citation>
    <scope>NUCLEOTIDE SEQUENCE [LARGE SCALE GENOMIC DNA]</scope>
    <source>
        <strain>129</strain>
    </source>
</reference>
<reference key="3">
    <citation type="journal article" date="2004" name="Genome Res.">
        <title>The status, quality, and expansion of the NIH full-length cDNA project: the Mammalian Gene Collection (MGC).</title>
        <authorList>
            <consortium name="The MGC Project Team"/>
        </authorList>
    </citation>
    <scope>NUCLEOTIDE SEQUENCE [LARGE SCALE MRNA]</scope>
    <source>
        <strain>FVB/N</strain>
        <tissue>Colon</tissue>
    </source>
</reference>
<proteinExistence type="evidence at transcript level"/>
<gene>
    <name type="primary">Fkbpl</name>
    <name type="synonym">Ng7</name>
</gene>
<evidence type="ECO:0000250" key="1"/>
<evidence type="ECO:0000250" key="2">
    <source>
        <dbReference type="UniProtKB" id="Q9UIM3"/>
    </source>
</evidence>
<evidence type="ECO:0000256" key="3">
    <source>
        <dbReference type="SAM" id="MobiDB-lite"/>
    </source>
</evidence>
<evidence type="ECO:0000305" key="4"/>
<accession>O35450</accession>
<accession>Q3UKG5</accession>
<keyword id="KW-0597">Phosphoprotein</keyword>
<keyword id="KW-1185">Reference proteome</keyword>
<keyword id="KW-0677">Repeat</keyword>
<keyword id="KW-0802">TPR repeat</keyword>
<dbReference type="EMBL" id="AK146018">
    <property type="protein sequence ID" value="BAE26836.1"/>
    <property type="molecule type" value="mRNA"/>
</dbReference>
<dbReference type="EMBL" id="AF030001">
    <property type="protein sequence ID" value="AAB82013.1"/>
    <property type="molecule type" value="Genomic_DNA"/>
</dbReference>
<dbReference type="EMBL" id="BC046338">
    <property type="protein sequence ID" value="AAH46338.1"/>
    <property type="molecule type" value="mRNA"/>
</dbReference>
<dbReference type="CCDS" id="CCDS28654.1"/>
<dbReference type="PIR" id="T09068">
    <property type="entry name" value="T09068"/>
</dbReference>
<dbReference type="RefSeq" id="NP_063926.1">
    <property type="nucleotide sequence ID" value="NM_019873.3"/>
</dbReference>
<dbReference type="RefSeq" id="XP_006524724.1">
    <property type="nucleotide sequence ID" value="XM_006524661.3"/>
</dbReference>
<dbReference type="RefSeq" id="XP_006524725.1">
    <property type="nucleotide sequence ID" value="XM_006524662.3"/>
</dbReference>
<dbReference type="SMR" id="O35450"/>
<dbReference type="BioGRID" id="207887">
    <property type="interactions" value="8"/>
</dbReference>
<dbReference type="FunCoup" id="O35450">
    <property type="interactions" value="298"/>
</dbReference>
<dbReference type="IntAct" id="O35450">
    <property type="interactions" value="1"/>
</dbReference>
<dbReference type="STRING" id="10090.ENSMUSP00000037273"/>
<dbReference type="iPTMnet" id="O35450"/>
<dbReference type="PhosphoSitePlus" id="O35450"/>
<dbReference type="SwissPalm" id="O35450"/>
<dbReference type="PaxDb" id="10090-ENSMUSP00000037273"/>
<dbReference type="PeptideAtlas" id="O35450"/>
<dbReference type="ProteomicsDB" id="267479"/>
<dbReference type="Pumba" id="O35450"/>
<dbReference type="Antibodypedia" id="28379">
    <property type="antibodies" value="284 antibodies from 29 providers"/>
</dbReference>
<dbReference type="Ensembl" id="ENSMUST00000036720.9">
    <property type="protein sequence ID" value="ENSMUSP00000037273.9"/>
    <property type="gene ID" value="ENSMUSG00000033739.9"/>
</dbReference>
<dbReference type="GeneID" id="56299"/>
<dbReference type="KEGG" id="mmu:56299"/>
<dbReference type="UCSC" id="uc008cdg.1">
    <property type="organism name" value="mouse"/>
</dbReference>
<dbReference type="AGR" id="MGI:1932127"/>
<dbReference type="CTD" id="63943"/>
<dbReference type="MGI" id="MGI:1932127">
    <property type="gene designation" value="Fkbpl"/>
</dbReference>
<dbReference type="VEuPathDB" id="HostDB:ENSMUSG00000033739"/>
<dbReference type="eggNOG" id="KOG1124">
    <property type="taxonomic scope" value="Eukaryota"/>
</dbReference>
<dbReference type="GeneTree" id="ENSGT00920000149187"/>
<dbReference type="HOGENOM" id="CLU_013615_13_0_1"/>
<dbReference type="InParanoid" id="O35450"/>
<dbReference type="OMA" id="WTELTIG"/>
<dbReference type="OrthoDB" id="433738at2759"/>
<dbReference type="PhylomeDB" id="O35450"/>
<dbReference type="TreeFam" id="TF105297"/>
<dbReference type="Reactome" id="R-MMU-8852276">
    <property type="pathway name" value="The role of GTSE1 in G2/M progression after G2 checkpoint"/>
</dbReference>
<dbReference type="BioGRID-ORCS" id="56299">
    <property type="hits" value="15 hits in 78 CRISPR screens"/>
</dbReference>
<dbReference type="PRO" id="PR:O35450"/>
<dbReference type="Proteomes" id="UP000000589">
    <property type="component" value="Chromosome 17"/>
</dbReference>
<dbReference type="RNAct" id="O35450">
    <property type="molecule type" value="protein"/>
</dbReference>
<dbReference type="Bgee" id="ENSMUSG00000033739">
    <property type="expression patterns" value="Expressed in seminiferous tubule of testis and 177 other cell types or tissues"/>
</dbReference>
<dbReference type="ExpressionAtlas" id="O35450">
    <property type="expression patterns" value="baseline and differential"/>
</dbReference>
<dbReference type="GO" id="GO:0005576">
    <property type="term" value="C:extracellular region"/>
    <property type="evidence" value="ECO:0000266"/>
    <property type="project" value="MGI"/>
</dbReference>
<dbReference type="GO" id="GO:0045765">
    <property type="term" value="P:regulation of angiogenesis"/>
    <property type="evidence" value="ECO:0000315"/>
    <property type="project" value="MGI"/>
</dbReference>
<dbReference type="GO" id="GO:1905553">
    <property type="term" value="P:regulation of blood vessel branching"/>
    <property type="evidence" value="ECO:0000315"/>
    <property type="project" value="MGI"/>
</dbReference>
<dbReference type="FunFam" id="1.25.40.10:FF:000251">
    <property type="entry name" value="FK506-binding protein-like isoform X1"/>
    <property type="match status" value="1"/>
</dbReference>
<dbReference type="Gene3D" id="1.25.40.10">
    <property type="entry name" value="Tetratricopeptide repeat domain"/>
    <property type="match status" value="1"/>
</dbReference>
<dbReference type="InterPro" id="IPR050754">
    <property type="entry name" value="FKBP4/5/8-like"/>
</dbReference>
<dbReference type="InterPro" id="IPR011990">
    <property type="entry name" value="TPR-like_helical_dom_sf"/>
</dbReference>
<dbReference type="InterPro" id="IPR019734">
    <property type="entry name" value="TPR_rpt"/>
</dbReference>
<dbReference type="PANTHER" id="PTHR46512:SF10">
    <property type="entry name" value="FK506-BINDING PROTEIN-LIKE"/>
    <property type="match status" value="1"/>
</dbReference>
<dbReference type="PANTHER" id="PTHR46512">
    <property type="entry name" value="PEPTIDYLPROLYL ISOMERASE"/>
    <property type="match status" value="1"/>
</dbReference>
<dbReference type="Pfam" id="PF00515">
    <property type="entry name" value="TPR_1"/>
    <property type="match status" value="1"/>
</dbReference>
<dbReference type="Pfam" id="PF13432">
    <property type="entry name" value="TPR_16"/>
    <property type="match status" value="1"/>
</dbReference>
<dbReference type="SMART" id="SM00028">
    <property type="entry name" value="TPR"/>
    <property type="match status" value="3"/>
</dbReference>
<dbReference type="SUPFAM" id="SSF54534">
    <property type="entry name" value="FKBP-like"/>
    <property type="match status" value="1"/>
</dbReference>
<dbReference type="SUPFAM" id="SSF48452">
    <property type="entry name" value="TPR-like"/>
    <property type="match status" value="1"/>
</dbReference>
<dbReference type="PROSITE" id="PS50005">
    <property type="entry name" value="TPR"/>
    <property type="match status" value="2"/>
</dbReference>
<dbReference type="PROSITE" id="PS50293">
    <property type="entry name" value="TPR_REGION"/>
    <property type="match status" value="1"/>
</dbReference>
<organism>
    <name type="scientific">Mus musculus</name>
    <name type="common">Mouse</name>
    <dbReference type="NCBI Taxonomy" id="10090"/>
    <lineage>
        <taxon>Eukaryota</taxon>
        <taxon>Metazoa</taxon>
        <taxon>Chordata</taxon>
        <taxon>Craniata</taxon>
        <taxon>Vertebrata</taxon>
        <taxon>Euteleostomi</taxon>
        <taxon>Mammalia</taxon>
        <taxon>Eutheria</taxon>
        <taxon>Euarchontoglires</taxon>
        <taxon>Glires</taxon>
        <taxon>Rodentia</taxon>
        <taxon>Myomorpha</taxon>
        <taxon>Muroidea</taxon>
        <taxon>Muridae</taxon>
        <taxon>Murinae</taxon>
        <taxon>Mus</taxon>
        <taxon>Mus</taxon>
    </lineage>
</organism>
<comment type="function">
    <text evidence="1">May be involved in response to X-ray. Regulates p21 protein stability by binding to Hsp90 and p21.</text>
</comment>
<comment type="subunit">
    <text evidence="1">Forms a ternary complex with CDKN1A/p21 and HSP90AB1/Hsp90.</text>
</comment>
<sequence length="347" mass="38302">METSPISPMNEKNTAQPQQREENAQQILNTAIPFRQRSPGLLPEALKVGVRPDPANQIVETQEIEHPVAGFEGDSDQFQVSTNEMAEHLQASDLWYCPDGSFVKKIIVPGHGLDKPKLGSKCQVLALGFPFGSGMPEGWTELTIGIGQWREKMWGELMEKCLESMRQGEEAKIHLPGSSAPLAKLRLDSFTNGRDSWEMEAMEKEALAKEEHRRGTELFRAGNPQGAARCYGRALRLLLTLPPPGPPERTTLYANLAACQLLLGHPQLAAQSCDRVLEREPGHLKALYRRGVARAALGDLEKATADFKKVLAVDPKNRAAKEELGKVVIQGRKQDAGLARGLRKMFS</sequence>
<protein>
    <recommendedName>
        <fullName>FK506-binding protein-like</fullName>
    </recommendedName>
    <alternativeName>
        <fullName>WAF-1/CIP1 stabilizing protein 39</fullName>
        <shortName>WISp39</shortName>
    </alternativeName>
</protein>
<name>FKBPL_MOUSE</name>
<feature type="chain" id="PRO_0000289879" description="FK506-binding protein-like">
    <location>
        <begin position="1"/>
        <end position="347"/>
    </location>
</feature>
<feature type="repeat" description="TPR 1">
    <location>
        <begin position="208"/>
        <end position="241"/>
    </location>
</feature>
<feature type="repeat" description="TPR 2">
    <location>
        <begin position="250"/>
        <end position="283"/>
    </location>
</feature>
<feature type="repeat" description="TPR 3">
    <location>
        <begin position="284"/>
        <end position="317"/>
    </location>
</feature>
<feature type="region of interest" description="Disordered" evidence="3">
    <location>
        <begin position="1"/>
        <end position="24"/>
    </location>
</feature>
<feature type="modified residue" description="Phosphothreonine" evidence="2">
    <location>
        <position position="3"/>
    </location>
</feature>
<feature type="sequence conflict" description="In Ref. 1; BAE26836." evidence="4" ref="1">
    <original>L</original>
    <variation>M</variation>
    <location>
        <position position="187"/>
    </location>
</feature>
<feature type="sequence conflict" description="In Ref. 1; BAE26836." evidence="4" ref="1">
    <original>L</original>
    <variation>I</variation>
    <location>
        <position position="252"/>
    </location>
</feature>